<evidence type="ECO:0000255" key="1">
    <source>
        <dbReference type="HAMAP-Rule" id="MF_00226"/>
    </source>
</evidence>
<name>CINA_STRS7</name>
<protein>
    <recommendedName>
        <fullName evidence="1">Putative competence-damage inducible protein</fullName>
    </recommendedName>
</protein>
<organism>
    <name type="scientific">Streptococcus equi subsp. zooepidemicus (strain H70)</name>
    <dbReference type="NCBI Taxonomy" id="553483"/>
    <lineage>
        <taxon>Bacteria</taxon>
        <taxon>Bacillati</taxon>
        <taxon>Bacillota</taxon>
        <taxon>Bacilli</taxon>
        <taxon>Lactobacillales</taxon>
        <taxon>Streptococcaceae</taxon>
        <taxon>Streptococcus</taxon>
    </lineage>
</organism>
<gene>
    <name evidence="1" type="primary">cinA</name>
    <name type="ordered locus">SZO_18650</name>
</gene>
<proteinExistence type="inferred from homology"/>
<accession>C0MGB7</accession>
<dbReference type="EMBL" id="FM204884">
    <property type="protein sequence ID" value="CAX00796.1"/>
    <property type="molecule type" value="Genomic_DNA"/>
</dbReference>
<dbReference type="SMR" id="C0MGB7"/>
<dbReference type="KEGG" id="seq:SZO_18650"/>
<dbReference type="PATRIC" id="fig|40041.11.peg.2002"/>
<dbReference type="eggNOG" id="COG1058">
    <property type="taxonomic scope" value="Bacteria"/>
</dbReference>
<dbReference type="eggNOG" id="COG1546">
    <property type="taxonomic scope" value="Bacteria"/>
</dbReference>
<dbReference type="HOGENOM" id="CLU_030805_9_3_9"/>
<dbReference type="Proteomes" id="UP000001368">
    <property type="component" value="Chromosome"/>
</dbReference>
<dbReference type="CDD" id="cd00885">
    <property type="entry name" value="cinA"/>
    <property type="match status" value="1"/>
</dbReference>
<dbReference type="Gene3D" id="3.30.70.2860">
    <property type="match status" value="1"/>
</dbReference>
<dbReference type="Gene3D" id="3.90.950.20">
    <property type="entry name" value="CinA-like"/>
    <property type="match status" value="1"/>
</dbReference>
<dbReference type="Gene3D" id="3.40.980.10">
    <property type="entry name" value="MoaB/Mog-like domain"/>
    <property type="match status" value="1"/>
</dbReference>
<dbReference type="HAMAP" id="MF_00226_B">
    <property type="entry name" value="CinA_B"/>
    <property type="match status" value="1"/>
</dbReference>
<dbReference type="InterPro" id="IPR050101">
    <property type="entry name" value="CinA"/>
</dbReference>
<dbReference type="InterPro" id="IPR036653">
    <property type="entry name" value="CinA-like_C"/>
</dbReference>
<dbReference type="InterPro" id="IPR008136">
    <property type="entry name" value="CinA_C"/>
</dbReference>
<dbReference type="InterPro" id="IPR041424">
    <property type="entry name" value="CinA_KH"/>
</dbReference>
<dbReference type="InterPro" id="IPR008135">
    <property type="entry name" value="Competence-induced_CinA"/>
</dbReference>
<dbReference type="InterPro" id="IPR036425">
    <property type="entry name" value="MoaB/Mog-like_dom_sf"/>
</dbReference>
<dbReference type="InterPro" id="IPR001453">
    <property type="entry name" value="MoaB/Mog_dom"/>
</dbReference>
<dbReference type="NCBIfam" id="TIGR00200">
    <property type="entry name" value="cinA_nterm"/>
    <property type="match status" value="1"/>
</dbReference>
<dbReference type="NCBIfam" id="TIGR00177">
    <property type="entry name" value="molyb_syn"/>
    <property type="match status" value="1"/>
</dbReference>
<dbReference type="NCBIfam" id="TIGR00199">
    <property type="entry name" value="PncC_domain"/>
    <property type="match status" value="1"/>
</dbReference>
<dbReference type="NCBIfam" id="NF001813">
    <property type="entry name" value="PRK00549.1"/>
    <property type="match status" value="1"/>
</dbReference>
<dbReference type="PANTHER" id="PTHR13939">
    <property type="entry name" value="NICOTINAMIDE-NUCLEOTIDE AMIDOHYDROLASE PNCC"/>
    <property type="match status" value="1"/>
</dbReference>
<dbReference type="PANTHER" id="PTHR13939:SF0">
    <property type="entry name" value="NMN AMIDOHYDROLASE-LIKE PROTEIN YFAY"/>
    <property type="match status" value="1"/>
</dbReference>
<dbReference type="Pfam" id="PF02464">
    <property type="entry name" value="CinA"/>
    <property type="match status" value="1"/>
</dbReference>
<dbReference type="Pfam" id="PF18146">
    <property type="entry name" value="CinA_KH"/>
    <property type="match status" value="1"/>
</dbReference>
<dbReference type="Pfam" id="PF00994">
    <property type="entry name" value="MoCF_biosynth"/>
    <property type="match status" value="1"/>
</dbReference>
<dbReference type="PIRSF" id="PIRSF006728">
    <property type="entry name" value="CinA"/>
    <property type="match status" value="1"/>
</dbReference>
<dbReference type="SMART" id="SM00852">
    <property type="entry name" value="MoCF_biosynth"/>
    <property type="match status" value="1"/>
</dbReference>
<dbReference type="SUPFAM" id="SSF142433">
    <property type="entry name" value="CinA-like"/>
    <property type="match status" value="1"/>
</dbReference>
<dbReference type="SUPFAM" id="SSF53218">
    <property type="entry name" value="Molybdenum cofactor biosynthesis proteins"/>
    <property type="match status" value="1"/>
</dbReference>
<feature type="chain" id="PRO_1000204330" description="Putative competence-damage inducible protein">
    <location>
        <begin position="1"/>
        <end position="423"/>
    </location>
</feature>
<comment type="similarity">
    <text evidence="1">Belongs to the CinA family.</text>
</comment>
<reference key="1">
    <citation type="journal article" date="2009" name="PLoS Pathog.">
        <title>Genomic evidence for the evolution of Streptococcus equi: host restriction, increased virulence, and genetic exchange with human pathogens.</title>
        <authorList>
            <person name="Holden M.T.G."/>
            <person name="Heather Z."/>
            <person name="Paillot R."/>
            <person name="Steward K.F."/>
            <person name="Webb K."/>
            <person name="Ainslie F."/>
            <person name="Jourdan T."/>
            <person name="Bason N.C."/>
            <person name="Holroyd N.E."/>
            <person name="Mungall K."/>
            <person name="Quail M.A."/>
            <person name="Sanders M."/>
            <person name="Simmonds M."/>
            <person name="Willey D."/>
            <person name="Brooks K."/>
            <person name="Aanensen D.M."/>
            <person name="Spratt B.G."/>
            <person name="Jolley K.A."/>
            <person name="Maiden M.C.J."/>
            <person name="Kehoe M."/>
            <person name="Chanter N."/>
            <person name="Bentley S.D."/>
            <person name="Robinson C."/>
            <person name="Maskell D.J."/>
            <person name="Parkhill J."/>
            <person name="Waller A.S."/>
        </authorList>
    </citation>
    <scope>NUCLEOTIDE SEQUENCE [LARGE SCALE GENOMIC DNA]</scope>
    <source>
        <strain>H70</strain>
    </source>
</reference>
<sequence length="423" mass="45933">MKAELIAVGTEILTGQIVNTNAQFLSEKMAELGIDVYFQTAVGDNEERLLSVIDIASQRSDLVILCGGLGPTDDDLTKQTLAKYLGKALVFDEQAGQKLDAFFAHRKQTARTPNNQRQAQLIEGSVALQNQTGLAVGGLITVDGVTYVVLPGPPSELKPMVKNELVPLLSASHASLYSRVLRFFGIGESQLVTALEDLIKYQTDPTIAPYAKTGEVTLRLSTKADHQALANERLDQLELQLLSIRTIDNQPLRRLLYGYGEDNSLARETFELLKRSGKTITAAESLTAGLFQAQLTDFAGASQVFNGGFITYSIEEKARMLGIPLVELQRHGVVSSFTAEQMAAQARCLTDSDIGIGLTGVAGPEELEEQPAGTVFIGLATKNKVESLKVVIGGRSRLDVRYIATLYAFNMVRKALLKSENLL</sequence>